<proteinExistence type="evidence at protein level"/>
<reference key="1">
    <citation type="submission" date="2001-08" db="EMBL/GenBank/DDBJ databases">
        <title>Beta isoform of mouse type II phosphatidylinositol 4-kinase (PI4KIIbeta).</title>
        <authorList>
            <person name="Hong W."/>
        </authorList>
    </citation>
    <scope>NUCLEOTIDE SEQUENCE [MRNA] (ISOFORM 1)</scope>
    <source>
        <strain>C57BL/6J</strain>
    </source>
</reference>
<reference key="2">
    <citation type="submission" date="2002-09" db="EMBL/GenBank/DDBJ databases">
        <title>A gene from our subtracted mouse compacted embryo cDNA library.</title>
        <authorList>
            <person name="Li W."/>
            <person name="Lu G."/>
        </authorList>
    </citation>
    <scope>NUCLEOTIDE SEQUENCE [MRNA] (ISOFORM 2)</scope>
    <source>
        <strain>Kunmingbai</strain>
    </source>
</reference>
<reference key="3">
    <citation type="journal article" date="2005" name="Science">
        <title>The transcriptional landscape of the mammalian genome.</title>
        <authorList>
            <person name="Carninci P."/>
            <person name="Kasukawa T."/>
            <person name="Katayama S."/>
            <person name="Gough J."/>
            <person name="Frith M.C."/>
            <person name="Maeda N."/>
            <person name="Oyama R."/>
            <person name="Ravasi T."/>
            <person name="Lenhard B."/>
            <person name="Wells C."/>
            <person name="Kodzius R."/>
            <person name="Shimokawa K."/>
            <person name="Bajic V.B."/>
            <person name="Brenner S.E."/>
            <person name="Batalov S."/>
            <person name="Forrest A.R."/>
            <person name="Zavolan M."/>
            <person name="Davis M.J."/>
            <person name="Wilming L.G."/>
            <person name="Aidinis V."/>
            <person name="Allen J.E."/>
            <person name="Ambesi-Impiombato A."/>
            <person name="Apweiler R."/>
            <person name="Aturaliya R.N."/>
            <person name="Bailey T.L."/>
            <person name="Bansal M."/>
            <person name="Baxter L."/>
            <person name="Beisel K.W."/>
            <person name="Bersano T."/>
            <person name="Bono H."/>
            <person name="Chalk A.M."/>
            <person name="Chiu K.P."/>
            <person name="Choudhary V."/>
            <person name="Christoffels A."/>
            <person name="Clutterbuck D.R."/>
            <person name="Crowe M.L."/>
            <person name="Dalla E."/>
            <person name="Dalrymple B.P."/>
            <person name="de Bono B."/>
            <person name="Della Gatta G."/>
            <person name="di Bernardo D."/>
            <person name="Down T."/>
            <person name="Engstrom P."/>
            <person name="Fagiolini M."/>
            <person name="Faulkner G."/>
            <person name="Fletcher C.F."/>
            <person name="Fukushima T."/>
            <person name="Furuno M."/>
            <person name="Futaki S."/>
            <person name="Gariboldi M."/>
            <person name="Georgii-Hemming P."/>
            <person name="Gingeras T.R."/>
            <person name="Gojobori T."/>
            <person name="Green R.E."/>
            <person name="Gustincich S."/>
            <person name="Harbers M."/>
            <person name="Hayashi Y."/>
            <person name="Hensch T.K."/>
            <person name="Hirokawa N."/>
            <person name="Hill D."/>
            <person name="Huminiecki L."/>
            <person name="Iacono M."/>
            <person name="Ikeo K."/>
            <person name="Iwama A."/>
            <person name="Ishikawa T."/>
            <person name="Jakt M."/>
            <person name="Kanapin A."/>
            <person name="Katoh M."/>
            <person name="Kawasawa Y."/>
            <person name="Kelso J."/>
            <person name="Kitamura H."/>
            <person name="Kitano H."/>
            <person name="Kollias G."/>
            <person name="Krishnan S.P."/>
            <person name="Kruger A."/>
            <person name="Kummerfeld S.K."/>
            <person name="Kurochkin I.V."/>
            <person name="Lareau L.F."/>
            <person name="Lazarevic D."/>
            <person name="Lipovich L."/>
            <person name="Liu J."/>
            <person name="Liuni S."/>
            <person name="McWilliam S."/>
            <person name="Madan Babu M."/>
            <person name="Madera M."/>
            <person name="Marchionni L."/>
            <person name="Matsuda H."/>
            <person name="Matsuzawa S."/>
            <person name="Miki H."/>
            <person name="Mignone F."/>
            <person name="Miyake S."/>
            <person name="Morris K."/>
            <person name="Mottagui-Tabar S."/>
            <person name="Mulder N."/>
            <person name="Nakano N."/>
            <person name="Nakauchi H."/>
            <person name="Ng P."/>
            <person name="Nilsson R."/>
            <person name="Nishiguchi S."/>
            <person name="Nishikawa S."/>
            <person name="Nori F."/>
            <person name="Ohara O."/>
            <person name="Okazaki Y."/>
            <person name="Orlando V."/>
            <person name="Pang K.C."/>
            <person name="Pavan W.J."/>
            <person name="Pavesi G."/>
            <person name="Pesole G."/>
            <person name="Petrovsky N."/>
            <person name="Piazza S."/>
            <person name="Reed J."/>
            <person name="Reid J.F."/>
            <person name="Ring B.Z."/>
            <person name="Ringwald M."/>
            <person name="Rost B."/>
            <person name="Ruan Y."/>
            <person name="Salzberg S.L."/>
            <person name="Sandelin A."/>
            <person name="Schneider C."/>
            <person name="Schoenbach C."/>
            <person name="Sekiguchi K."/>
            <person name="Semple C.A."/>
            <person name="Seno S."/>
            <person name="Sessa L."/>
            <person name="Sheng Y."/>
            <person name="Shibata Y."/>
            <person name="Shimada H."/>
            <person name="Shimada K."/>
            <person name="Silva D."/>
            <person name="Sinclair B."/>
            <person name="Sperling S."/>
            <person name="Stupka E."/>
            <person name="Sugiura K."/>
            <person name="Sultana R."/>
            <person name="Takenaka Y."/>
            <person name="Taki K."/>
            <person name="Tammoja K."/>
            <person name="Tan S.L."/>
            <person name="Tang S."/>
            <person name="Taylor M.S."/>
            <person name="Tegner J."/>
            <person name="Teichmann S.A."/>
            <person name="Ueda H.R."/>
            <person name="van Nimwegen E."/>
            <person name="Verardo R."/>
            <person name="Wei C.L."/>
            <person name="Yagi K."/>
            <person name="Yamanishi H."/>
            <person name="Zabarovsky E."/>
            <person name="Zhu S."/>
            <person name="Zimmer A."/>
            <person name="Hide W."/>
            <person name="Bult C."/>
            <person name="Grimmond S.M."/>
            <person name="Teasdale R.D."/>
            <person name="Liu E.T."/>
            <person name="Brusic V."/>
            <person name="Quackenbush J."/>
            <person name="Wahlestedt C."/>
            <person name="Mattick J.S."/>
            <person name="Hume D.A."/>
            <person name="Kai C."/>
            <person name="Sasaki D."/>
            <person name="Tomaru Y."/>
            <person name="Fukuda S."/>
            <person name="Kanamori-Katayama M."/>
            <person name="Suzuki M."/>
            <person name="Aoki J."/>
            <person name="Arakawa T."/>
            <person name="Iida J."/>
            <person name="Imamura K."/>
            <person name="Itoh M."/>
            <person name="Kato T."/>
            <person name="Kawaji H."/>
            <person name="Kawagashira N."/>
            <person name="Kawashima T."/>
            <person name="Kojima M."/>
            <person name="Kondo S."/>
            <person name="Konno H."/>
            <person name="Nakano K."/>
            <person name="Ninomiya N."/>
            <person name="Nishio T."/>
            <person name="Okada M."/>
            <person name="Plessy C."/>
            <person name="Shibata K."/>
            <person name="Shiraki T."/>
            <person name="Suzuki S."/>
            <person name="Tagami M."/>
            <person name="Waki K."/>
            <person name="Watahiki A."/>
            <person name="Okamura-Oho Y."/>
            <person name="Suzuki H."/>
            <person name="Kawai J."/>
            <person name="Hayashizaki Y."/>
        </authorList>
    </citation>
    <scope>NUCLEOTIDE SEQUENCE [LARGE SCALE MRNA] (ISOFORMS 1 AND 2)</scope>
    <source>
        <strain>C57BL/6J</strain>
        <strain>NOD</strain>
        <tissue>Testis</tissue>
        <tissue>Urinary bladder</tissue>
    </source>
</reference>
<reference key="4">
    <citation type="journal article" date="2004" name="Genome Res.">
        <title>The status, quality, and expansion of the NIH full-length cDNA project: the Mammalian Gene Collection (MGC).</title>
        <authorList>
            <consortium name="The MGC Project Team"/>
        </authorList>
    </citation>
    <scope>NUCLEOTIDE SEQUENCE [LARGE SCALE MRNA] (ISOFORM 1)</scope>
    <source>
        <strain>FVB/N</strain>
        <tissue>Embryo</tissue>
        <tissue>Mammary tumor</tissue>
    </source>
</reference>
<reference key="5">
    <citation type="journal article" date="2009" name="Immunity">
        <title>The phagosomal proteome in interferon-gamma-activated macrophages.</title>
        <authorList>
            <person name="Trost M."/>
            <person name="English L."/>
            <person name="Lemieux S."/>
            <person name="Courcelles M."/>
            <person name="Desjardins M."/>
            <person name="Thibault P."/>
        </authorList>
    </citation>
    <scope>IDENTIFICATION BY MASS SPECTROMETRY [LARGE SCALE ANALYSIS]</scope>
</reference>
<reference key="6">
    <citation type="journal article" date="2010" name="Cell">
        <title>A tissue-specific atlas of mouse protein phosphorylation and expression.</title>
        <authorList>
            <person name="Huttlin E.L."/>
            <person name="Jedrychowski M.P."/>
            <person name="Elias J.E."/>
            <person name="Goswami T."/>
            <person name="Rad R."/>
            <person name="Beausoleil S.A."/>
            <person name="Villen J."/>
            <person name="Haas W."/>
            <person name="Sowa M.E."/>
            <person name="Gygi S.P."/>
        </authorList>
    </citation>
    <scope>IDENTIFICATION BY MASS SPECTROMETRY [LARGE SCALE ANALYSIS]</scope>
    <source>
        <tissue>Pancreas</tissue>
        <tissue>Testis</tissue>
    </source>
</reference>
<accession>Q8CBQ5</accession>
<accession>Q91Z30</accession>
<accession>Q9D072</accession>
<accession>Q9D471</accession>
<sequence>MAEACEPTRPSEDEDEEREPLLPRVAWAQPRRVAPGSAVRMQADEGADVLREPATDEPPAVSGEGSISASLSTELDRTRTTSSETNTFLEDPEFADIVLKAEQAIEIGVFPERISQGSSGSYFVKDSKRNIIGVFKPKSEEPYGQLNPKWTKYVHKVCCPCCFGRGCLLPNQGYLSEAGAYLVDVKLNLGIVPKTKVVWLVSETFNYSAIDRAKSRGKKYALEKVPKVGRKFHRIGLPPKVGSFQLFVKDYKEAEYWLRRFEAEPLPENIRKQFQSQFEKLVILDYIIRNTDRGNDNWLVKYDEMKYAKKIESEESNWIDNKQLLIKIAAIDNGLAFPFKHPDEWRAYPFHWAWLPQAKVPFSEETRNLILPYISDMNFVQDLCEDLYELFKTDKGFDRAAFENQMSVMRGQILNLTQALRDGKSPMQLAQMPCVIVECSKSGSQGRVVHLGSSFTQTVHCRKPFFSSW</sequence>
<keyword id="KW-0025">Alternative splicing</keyword>
<keyword id="KW-0067">ATP-binding</keyword>
<keyword id="KW-1003">Cell membrane</keyword>
<keyword id="KW-0963">Cytoplasm</keyword>
<keyword id="KW-0256">Endoplasmic reticulum</keyword>
<keyword id="KW-0967">Endosome</keyword>
<keyword id="KW-0333">Golgi apparatus</keyword>
<keyword id="KW-0418">Kinase</keyword>
<keyword id="KW-0443">Lipid metabolism</keyword>
<keyword id="KW-0472">Membrane</keyword>
<keyword id="KW-0547">Nucleotide-binding</keyword>
<keyword id="KW-0597">Phosphoprotein</keyword>
<keyword id="KW-1185">Reference proteome</keyword>
<keyword id="KW-0808">Transferase</keyword>
<evidence type="ECO:0000250" key="1">
    <source>
        <dbReference type="UniProtKB" id="Q8TCG2"/>
    </source>
</evidence>
<evidence type="ECO:0000250" key="2">
    <source>
        <dbReference type="UniProtKB" id="Q9BTU6"/>
    </source>
</evidence>
<evidence type="ECO:0000255" key="3">
    <source>
        <dbReference type="PROSITE-ProRule" id="PRU00269"/>
    </source>
</evidence>
<evidence type="ECO:0000256" key="4">
    <source>
        <dbReference type="SAM" id="MobiDB-lite"/>
    </source>
</evidence>
<evidence type="ECO:0000303" key="5">
    <source>
    </source>
</evidence>
<evidence type="ECO:0000303" key="6">
    <source ref="2"/>
</evidence>
<evidence type="ECO:0000305" key="7"/>
<protein>
    <recommendedName>
        <fullName>Phosphatidylinositol 4-kinase type 2-beta</fullName>
        <ecNumber evidence="1">2.7.1.67</ecNumber>
    </recommendedName>
    <alternativeName>
        <fullName>Phosphatidylinositol 4-kinase type II-beta</fullName>
    </alternativeName>
</protein>
<organism>
    <name type="scientific">Mus musculus</name>
    <name type="common">Mouse</name>
    <dbReference type="NCBI Taxonomy" id="10090"/>
    <lineage>
        <taxon>Eukaryota</taxon>
        <taxon>Metazoa</taxon>
        <taxon>Chordata</taxon>
        <taxon>Craniata</taxon>
        <taxon>Vertebrata</taxon>
        <taxon>Euteleostomi</taxon>
        <taxon>Mammalia</taxon>
        <taxon>Eutheria</taxon>
        <taxon>Euarchontoglires</taxon>
        <taxon>Glires</taxon>
        <taxon>Rodentia</taxon>
        <taxon>Myomorpha</taxon>
        <taxon>Muroidea</taxon>
        <taxon>Muridae</taxon>
        <taxon>Murinae</taxon>
        <taxon>Mus</taxon>
        <taxon>Mus</taxon>
    </lineage>
</organism>
<name>P4K2B_MOUSE</name>
<gene>
    <name type="primary">Pi4k2b</name>
</gene>
<dbReference type="EC" id="2.7.1.67" evidence="1"/>
<dbReference type="EMBL" id="AF411321">
    <property type="protein sequence ID" value="AAL04155.1"/>
    <property type="molecule type" value="mRNA"/>
</dbReference>
<dbReference type="EMBL" id="AY148879">
    <property type="protein sequence ID" value="AAN37399.1"/>
    <property type="molecule type" value="mRNA"/>
</dbReference>
<dbReference type="EMBL" id="AK011751">
    <property type="protein sequence ID" value="BAB27819.1"/>
    <property type="molecule type" value="mRNA"/>
</dbReference>
<dbReference type="EMBL" id="AK016754">
    <property type="protein sequence ID" value="BAB30411.1"/>
    <property type="molecule type" value="mRNA"/>
</dbReference>
<dbReference type="EMBL" id="AK035523">
    <property type="protein sequence ID" value="BAC29091.1"/>
    <property type="molecule type" value="mRNA"/>
</dbReference>
<dbReference type="EMBL" id="AK170730">
    <property type="protein sequence ID" value="BAE41986.1"/>
    <property type="molecule type" value="mRNA"/>
</dbReference>
<dbReference type="EMBL" id="BC010257">
    <property type="protein sequence ID" value="AAH10257.1"/>
    <property type="molecule type" value="mRNA"/>
</dbReference>
<dbReference type="EMBL" id="BC062144">
    <property type="protein sequence ID" value="AAH62144.1"/>
    <property type="molecule type" value="mRNA"/>
</dbReference>
<dbReference type="CCDS" id="CCDS19287.1">
    <molecule id="Q8CBQ5-1"/>
</dbReference>
<dbReference type="CCDS" id="CCDS39086.1">
    <molecule id="Q8CBQ5-2"/>
</dbReference>
<dbReference type="RefSeq" id="NP_080227.2">
    <molecule id="Q8CBQ5-1"/>
    <property type="nucleotide sequence ID" value="NM_025951.3"/>
</dbReference>
<dbReference type="RefSeq" id="NP_083020.2">
    <molecule id="Q8CBQ5-2"/>
    <property type="nucleotide sequence ID" value="NM_028744.3"/>
</dbReference>
<dbReference type="SMR" id="Q8CBQ5"/>
<dbReference type="FunCoup" id="Q8CBQ5">
    <property type="interactions" value="2018"/>
</dbReference>
<dbReference type="STRING" id="10090.ENSMUSP00000031081"/>
<dbReference type="iPTMnet" id="Q8CBQ5"/>
<dbReference type="PhosphoSitePlus" id="Q8CBQ5"/>
<dbReference type="SwissPalm" id="Q8CBQ5"/>
<dbReference type="PaxDb" id="10090-ENSMUSP00000031081"/>
<dbReference type="PeptideAtlas" id="Q8CBQ5"/>
<dbReference type="ProteomicsDB" id="294095">
    <molecule id="Q8CBQ5-1"/>
</dbReference>
<dbReference type="ProteomicsDB" id="294096">
    <molecule id="Q8CBQ5-2"/>
</dbReference>
<dbReference type="Pumba" id="Q8CBQ5"/>
<dbReference type="Antibodypedia" id="1318">
    <property type="antibodies" value="185 antibodies from 27 providers"/>
</dbReference>
<dbReference type="DNASU" id="67073"/>
<dbReference type="Ensembl" id="ENSMUST00000031081.11">
    <molecule id="Q8CBQ5-1"/>
    <property type="protein sequence ID" value="ENSMUSP00000031081.5"/>
    <property type="gene ID" value="ENSMUSG00000029186.13"/>
</dbReference>
<dbReference type="Ensembl" id="ENSMUST00000031082.8">
    <molecule id="Q8CBQ5-2"/>
    <property type="protein sequence ID" value="ENSMUSP00000031082.7"/>
    <property type="gene ID" value="ENSMUSG00000029186.13"/>
</dbReference>
<dbReference type="GeneID" id="67073"/>
<dbReference type="KEGG" id="mmu:67073"/>
<dbReference type="UCSC" id="uc008xkq.2">
    <molecule id="Q8CBQ5-1"/>
    <property type="organism name" value="mouse"/>
</dbReference>
<dbReference type="UCSC" id="uc008xkr.2">
    <molecule id="Q8CBQ5-2"/>
    <property type="organism name" value="mouse"/>
</dbReference>
<dbReference type="AGR" id="MGI:1914323"/>
<dbReference type="CTD" id="55300"/>
<dbReference type="MGI" id="MGI:1914323">
    <property type="gene designation" value="Pi4k2b"/>
</dbReference>
<dbReference type="VEuPathDB" id="HostDB:ENSMUSG00000029186"/>
<dbReference type="eggNOG" id="KOG2381">
    <property type="taxonomic scope" value="Eukaryota"/>
</dbReference>
<dbReference type="GeneTree" id="ENSGT00390000010434"/>
<dbReference type="HOGENOM" id="CLU_032516_1_0_1"/>
<dbReference type="InParanoid" id="Q8CBQ5"/>
<dbReference type="OMA" id="PYAKVPF"/>
<dbReference type="OrthoDB" id="3349449at2759"/>
<dbReference type="PhylomeDB" id="Q8CBQ5"/>
<dbReference type="TreeFam" id="TF314740"/>
<dbReference type="Reactome" id="R-MMU-1483248">
    <property type="pathway name" value="Synthesis of PIPs at the ER membrane"/>
</dbReference>
<dbReference type="Reactome" id="R-MMU-1660499">
    <property type="pathway name" value="Synthesis of PIPs at the plasma membrane"/>
</dbReference>
<dbReference type="Reactome" id="R-MMU-1660514">
    <property type="pathway name" value="Synthesis of PIPs at the Golgi membrane"/>
</dbReference>
<dbReference type="Reactome" id="R-MMU-1660516">
    <property type="pathway name" value="Synthesis of PIPs at the early endosome membrane"/>
</dbReference>
<dbReference type="BioGRID-ORCS" id="67073">
    <property type="hits" value="2 hits in 79 CRISPR screens"/>
</dbReference>
<dbReference type="ChiTaRS" id="Pi4k2b">
    <property type="organism name" value="mouse"/>
</dbReference>
<dbReference type="PRO" id="PR:Q8CBQ5"/>
<dbReference type="Proteomes" id="UP000000589">
    <property type="component" value="Chromosome 5"/>
</dbReference>
<dbReference type="RNAct" id="Q8CBQ5">
    <property type="molecule type" value="protein"/>
</dbReference>
<dbReference type="Bgee" id="ENSMUSG00000029186">
    <property type="expression patterns" value="Expressed in left lung lobe and 240 other cell types or tissues"/>
</dbReference>
<dbReference type="ExpressionAtlas" id="Q8CBQ5">
    <property type="expression patterns" value="baseline and differential"/>
</dbReference>
<dbReference type="GO" id="GO:0005829">
    <property type="term" value="C:cytosol"/>
    <property type="evidence" value="ECO:0000250"/>
    <property type="project" value="UniProtKB"/>
</dbReference>
<dbReference type="GO" id="GO:0031901">
    <property type="term" value="C:early endosome membrane"/>
    <property type="evidence" value="ECO:0007669"/>
    <property type="project" value="UniProtKB-SubCell"/>
</dbReference>
<dbReference type="GO" id="GO:0005789">
    <property type="term" value="C:endoplasmic reticulum membrane"/>
    <property type="evidence" value="ECO:0000250"/>
    <property type="project" value="UniProtKB"/>
</dbReference>
<dbReference type="GO" id="GO:0000139">
    <property type="term" value="C:Golgi membrane"/>
    <property type="evidence" value="ECO:0000250"/>
    <property type="project" value="UniProtKB"/>
</dbReference>
<dbReference type="GO" id="GO:0005886">
    <property type="term" value="C:plasma membrane"/>
    <property type="evidence" value="ECO:0000250"/>
    <property type="project" value="UniProtKB"/>
</dbReference>
<dbReference type="GO" id="GO:0004430">
    <property type="term" value="F:1-phosphatidylinositol 4-kinase activity"/>
    <property type="evidence" value="ECO:0000250"/>
    <property type="project" value="UniProtKB"/>
</dbReference>
<dbReference type="GO" id="GO:0005524">
    <property type="term" value="F:ATP binding"/>
    <property type="evidence" value="ECO:0007669"/>
    <property type="project" value="UniProtKB-KW"/>
</dbReference>
<dbReference type="GO" id="GO:0046854">
    <property type="term" value="P:phosphatidylinositol phosphate biosynthetic process"/>
    <property type="evidence" value="ECO:0000250"/>
    <property type="project" value="UniProtKB"/>
</dbReference>
<dbReference type="Gene3D" id="1.10.1070.20">
    <property type="match status" value="1"/>
</dbReference>
<dbReference type="InterPro" id="IPR039756">
    <property type="entry name" value="Lsb6/PI4K2"/>
</dbReference>
<dbReference type="InterPro" id="IPR000403">
    <property type="entry name" value="PI3/4_kinase_cat_dom"/>
</dbReference>
<dbReference type="PANTHER" id="PTHR12865:SF6">
    <property type="entry name" value="PHOSPHATIDYLINOSITOL 4-KINASE TYPE 2-BETA"/>
    <property type="match status" value="1"/>
</dbReference>
<dbReference type="PANTHER" id="PTHR12865">
    <property type="entry name" value="PHOSPHATIDYLINOSITOL 4-KINASE TYPE-II"/>
    <property type="match status" value="1"/>
</dbReference>
<dbReference type="Pfam" id="PF00454">
    <property type="entry name" value="PI3_PI4_kinase"/>
    <property type="match status" value="1"/>
</dbReference>
<dbReference type="PROSITE" id="PS50290">
    <property type="entry name" value="PI3_4_KINASE_3"/>
    <property type="match status" value="1"/>
</dbReference>
<comment type="function">
    <text evidence="1">Together with PI4K2A and the type III PI4Ks (PIK4CA and PIK4CB) it contributes to the overall PI4-kinase activity of the cell. This contribution may be especially significant in plasma membrane, endosomal and Golgi compartments. The phosphorylation of phosphatidylinositol (PI) to PI4P is the first committed step in the generation of phosphatidylinositol 4,5-bisphosphate (PIP2), a precursor of the second messenger inositol 1,4,5-trisphosphate (InsP3). Contributes to the production of InsP3 in stimulated cells and is likely to be involved in the regulation of vesicular trafficking.</text>
</comment>
<comment type="catalytic activity">
    <reaction evidence="1">
        <text>a 1,2-diacyl-sn-glycero-3-phospho-(1D-myo-inositol) + ATP = a 1,2-diacyl-sn-glycero-3-phospho-(1D-myo-inositol 4-phosphate) + ADP + H(+)</text>
        <dbReference type="Rhea" id="RHEA:19877"/>
        <dbReference type="ChEBI" id="CHEBI:15378"/>
        <dbReference type="ChEBI" id="CHEBI:30616"/>
        <dbReference type="ChEBI" id="CHEBI:57880"/>
        <dbReference type="ChEBI" id="CHEBI:58178"/>
        <dbReference type="ChEBI" id="CHEBI:456216"/>
        <dbReference type="EC" id="2.7.1.67"/>
    </reaction>
    <physiologicalReaction direction="left-to-right" evidence="1">
        <dbReference type="Rhea" id="RHEA:19878"/>
    </physiologicalReaction>
</comment>
<comment type="subcellular location">
    <subcellularLocation>
        <location evidence="1">Cytoplasm</location>
        <location evidence="1">Cytosol</location>
    </subcellularLocation>
    <subcellularLocation>
        <location evidence="1">Golgi apparatus membrane</location>
        <topology evidence="1">Peripheral membrane protein</topology>
    </subcellularLocation>
    <subcellularLocation>
        <location evidence="1">Endoplasmic reticulum membrane</location>
    </subcellularLocation>
    <subcellularLocation>
        <location evidence="1">Cell membrane</location>
    </subcellularLocation>
    <subcellularLocation>
        <location evidence="1">Early endosome membrane</location>
    </subcellularLocation>
    <text evidence="1">Mainly cytosolic, association with membranes of the Golgi, endoplasmic and plasma membrane is stimulated by active RAC1. Association with early endosomes has not been confirmed.</text>
</comment>
<comment type="alternative products">
    <event type="alternative splicing"/>
    <isoform>
        <id>Q8CBQ5-1</id>
        <name>1</name>
        <sequence type="displayed"/>
    </isoform>
    <isoform>
        <id>Q8CBQ5-2</id>
        <name>2</name>
        <sequence type="described" ref="VSP_024828"/>
    </isoform>
</comment>
<comment type="similarity">
    <text evidence="7">Belongs to the PI3/PI4-kinase family. Type II PI4K subfamily.</text>
</comment>
<feature type="chain" id="PRO_0000285165" description="Phosphatidylinositol 4-kinase type 2-beta">
    <location>
        <begin position="1"/>
        <end position="469"/>
    </location>
</feature>
<feature type="domain" description="PI3K/PI4K catalytic" evidence="3">
    <location>
        <begin position="108"/>
        <end position="439"/>
    </location>
</feature>
<feature type="region of interest" description="Disordered" evidence="4">
    <location>
        <begin position="1"/>
        <end position="84"/>
    </location>
</feature>
<feature type="region of interest" description="G-loop" evidence="3">
    <location>
        <begin position="114"/>
        <end position="120"/>
    </location>
</feature>
<feature type="region of interest" description="Important for substrate binding" evidence="2">
    <location>
        <begin position="141"/>
        <end position="143"/>
    </location>
</feature>
<feature type="region of interest" description="Important for interaction with membranes" evidence="2">
    <location>
        <begin position="149"/>
        <end position="162"/>
    </location>
</feature>
<feature type="region of interest" description="Important for interaction with membranes" evidence="2">
    <location>
        <begin position="252"/>
        <end position="260"/>
    </location>
</feature>
<feature type="region of interest" description="Catalytic loop" evidence="3">
    <location>
        <begin position="289"/>
        <end position="297"/>
    </location>
</feature>
<feature type="region of interest" description="Activation loop" evidence="3">
    <location>
        <begin position="330"/>
        <end position="350"/>
    </location>
</feature>
<feature type="region of interest" description="Important for interaction with membranes" evidence="2">
    <location>
        <begin position="345"/>
        <end position="354"/>
    </location>
</feature>
<feature type="binding site" evidence="1">
    <location>
        <position position="121"/>
    </location>
    <ligand>
        <name>ATP</name>
        <dbReference type="ChEBI" id="CHEBI:30616"/>
    </ligand>
</feature>
<feature type="binding site" evidence="1">
    <location>
        <position position="136"/>
    </location>
    <ligand>
        <name>ATP</name>
        <dbReference type="ChEBI" id="CHEBI:30616"/>
    </ligand>
</feature>
<feature type="binding site" evidence="1">
    <location>
        <begin position="245"/>
        <end position="248"/>
    </location>
    <ligand>
        <name>ATP</name>
        <dbReference type="ChEBI" id="CHEBI:30616"/>
    </ligand>
</feature>
<feature type="binding site" evidence="1">
    <location>
        <begin position="259"/>
        <end position="260"/>
    </location>
    <ligand>
        <name>ATP</name>
        <dbReference type="ChEBI" id="CHEBI:30616"/>
    </ligand>
</feature>
<feature type="binding site" evidence="1">
    <location>
        <position position="332"/>
    </location>
    <ligand>
        <name>ATP</name>
        <dbReference type="ChEBI" id="CHEBI:30616"/>
    </ligand>
</feature>
<feature type="modified residue" description="Phosphoserine" evidence="1">
    <location>
        <position position="37"/>
    </location>
</feature>
<feature type="splice variant" id="VSP_024828" description="In isoform 2." evidence="5 6">
    <original>ETNTFLEDPEFADIVLKAEQAIEIGVFPERISQGSSGSYFVKDSKR</original>
    <variation>GPELCPFYSRSLCYKTTTALGYY</variation>
    <location>
        <begin position="84"/>
        <end position="129"/>
    </location>
</feature>
<feature type="sequence conflict" description="In Ref. 1; AAL04155 and 3; BAB27819." evidence="7" ref="1 3">
    <original>W</original>
    <variation>L</variation>
    <location>
        <position position="199"/>
    </location>
</feature>
<feature type="sequence conflict" description="In Ref. 2; AAN37399." evidence="7" ref="2">
    <original>GRKFHRIG</original>
    <variation>AESPSDR</variation>
    <location>
        <begin position="229"/>
        <end position="236"/>
    </location>
</feature>
<feature type="sequence conflict" description="In Ref. 2; AAN37399 and 3; BAB30411." evidence="7" ref="2 3">
    <original>F</original>
    <variation>S</variation>
    <location>
        <position position="244"/>
    </location>
</feature>
<feature type="sequence conflict" description="In Ref. 2; AAN37399 and 3; BAB30411." evidence="7" ref="2 3">
    <original>F</original>
    <variation>Y</variation>
    <location>
        <position position="261"/>
    </location>
</feature>
<feature type="sequence conflict" description="In Ref. 4; AAH10257." evidence="7" ref="4">
    <original>R</original>
    <variation>K</variation>
    <location>
        <position position="399"/>
    </location>
</feature>